<keyword id="KW-0963">Cytoplasm</keyword>
<keyword id="KW-0378">Hydrolase</keyword>
<keyword id="KW-0479">Metal-binding</keyword>
<keyword id="KW-0533">Nickel</keyword>
<keyword id="KW-1185">Reference proteome</keyword>
<dbReference type="EC" id="3.5.1.5" evidence="1"/>
<dbReference type="EMBL" id="CP000569">
    <property type="protein sequence ID" value="ABN74700.1"/>
    <property type="molecule type" value="Genomic_DNA"/>
</dbReference>
<dbReference type="RefSeq" id="WP_009874593.1">
    <property type="nucleotide sequence ID" value="NC_009053.1"/>
</dbReference>
<dbReference type="SMR" id="A3N2R4"/>
<dbReference type="STRING" id="416269.APL_1616"/>
<dbReference type="MEROPS" id="M38.982"/>
<dbReference type="EnsemblBacteria" id="ABN74700">
    <property type="protein sequence ID" value="ABN74700"/>
    <property type="gene ID" value="APL_1616"/>
</dbReference>
<dbReference type="KEGG" id="apl:APL_1616"/>
<dbReference type="PATRIC" id="fig|416269.6.peg.1682"/>
<dbReference type="eggNOG" id="COG0804">
    <property type="taxonomic scope" value="Bacteria"/>
</dbReference>
<dbReference type="HOGENOM" id="CLU_000980_0_0_6"/>
<dbReference type="UniPathway" id="UPA00258">
    <property type="reaction ID" value="UER00370"/>
</dbReference>
<dbReference type="Proteomes" id="UP000001432">
    <property type="component" value="Chromosome"/>
</dbReference>
<dbReference type="GO" id="GO:0005737">
    <property type="term" value="C:cytoplasm"/>
    <property type="evidence" value="ECO:0007669"/>
    <property type="project" value="UniProtKB-SubCell"/>
</dbReference>
<dbReference type="GO" id="GO:0016151">
    <property type="term" value="F:nickel cation binding"/>
    <property type="evidence" value="ECO:0007669"/>
    <property type="project" value="UniProtKB-UniRule"/>
</dbReference>
<dbReference type="GO" id="GO:0009039">
    <property type="term" value="F:urease activity"/>
    <property type="evidence" value="ECO:0007669"/>
    <property type="project" value="UniProtKB-UniRule"/>
</dbReference>
<dbReference type="GO" id="GO:0043419">
    <property type="term" value="P:urea catabolic process"/>
    <property type="evidence" value="ECO:0007669"/>
    <property type="project" value="UniProtKB-UniRule"/>
</dbReference>
<dbReference type="CDD" id="cd00375">
    <property type="entry name" value="Urease_alpha"/>
    <property type="match status" value="1"/>
</dbReference>
<dbReference type="Gene3D" id="3.20.20.140">
    <property type="entry name" value="Metal-dependent hydrolases"/>
    <property type="match status" value="1"/>
</dbReference>
<dbReference type="Gene3D" id="2.30.40.10">
    <property type="entry name" value="Urease, subunit C, domain 1"/>
    <property type="match status" value="1"/>
</dbReference>
<dbReference type="HAMAP" id="MF_01953">
    <property type="entry name" value="Urease_alpha"/>
    <property type="match status" value="1"/>
</dbReference>
<dbReference type="InterPro" id="IPR006680">
    <property type="entry name" value="Amidohydro-rel"/>
</dbReference>
<dbReference type="InterPro" id="IPR011059">
    <property type="entry name" value="Metal-dep_hydrolase_composite"/>
</dbReference>
<dbReference type="InterPro" id="IPR032466">
    <property type="entry name" value="Metal_Hydrolase"/>
</dbReference>
<dbReference type="InterPro" id="IPR011612">
    <property type="entry name" value="Urease_alpha_N_dom"/>
</dbReference>
<dbReference type="InterPro" id="IPR050112">
    <property type="entry name" value="Urease_alpha_subunit"/>
</dbReference>
<dbReference type="InterPro" id="IPR017950">
    <property type="entry name" value="Urease_AS"/>
</dbReference>
<dbReference type="InterPro" id="IPR005848">
    <property type="entry name" value="Urease_asu"/>
</dbReference>
<dbReference type="InterPro" id="IPR017951">
    <property type="entry name" value="Urease_asu_c"/>
</dbReference>
<dbReference type="InterPro" id="IPR029754">
    <property type="entry name" value="Urease_Ni-bd"/>
</dbReference>
<dbReference type="NCBIfam" id="NF009686">
    <property type="entry name" value="PRK13207.1"/>
    <property type="match status" value="1"/>
</dbReference>
<dbReference type="NCBIfam" id="TIGR01792">
    <property type="entry name" value="urease_alph"/>
    <property type="match status" value="1"/>
</dbReference>
<dbReference type="PANTHER" id="PTHR43440">
    <property type="entry name" value="UREASE"/>
    <property type="match status" value="1"/>
</dbReference>
<dbReference type="PANTHER" id="PTHR43440:SF1">
    <property type="entry name" value="UREASE"/>
    <property type="match status" value="1"/>
</dbReference>
<dbReference type="Pfam" id="PF01979">
    <property type="entry name" value="Amidohydro_1"/>
    <property type="match status" value="1"/>
</dbReference>
<dbReference type="Pfam" id="PF00449">
    <property type="entry name" value="Urease_alpha"/>
    <property type="match status" value="1"/>
</dbReference>
<dbReference type="PRINTS" id="PR01752">
    <property type="entry name" value="UREASE"/>
</dbReference>
<dbReference type="SUPFAM" id="SSF51338">
    <property type="entry name" value="Composite domain of metallo-dependent hydrolases"/>
    <property type="match status" value="2"/>
</dbReference>
<dbReference type="SUPFAM" id="SSF51556">
    <property type="entry name" value="Metallo-dependent hydrolases"/>
    <property type="match status" value="1"/>
</dbReference>
<dbReference type="PROSITE" id="PS01120">
    <property type="entry name" value="UREASE_1"/>
    <property type="match status" value="1"/>
</dbReference>
<dbReference type="PROSITE" id="PS00145">
    <property type="entry name" value="UREASE_2"/>
    <property type="match status" value="1"/>
</dbReference>
<dbReference type="PROSITE" id="PS51368">
    <property type="entry name" value="UREASE_3"/>
    <property type="match status" value="1"/>
</dbReference>
<protein>
    <recommendedName>
        <fullName evidence="1">Urease subunit alpha</fullName>
        <ecNumber evidence="1">3.5.1.5</ecNumber>
    </recommendedName>
    <alternativeName>
        <fullName evidence="1">Urea amidohydrolase subunit alpha</fullName>
    </alternativeName>
</protein>
<sequence>MALTIPRSQYVATYGPTVGDKVRLGDTDLWATIEQDFLTKGDECKFGGGKSVRDGMAQSSTSTRDNPNVLDFALTNVMIIDAKLGIIKADIGIRDGRIVGIGQAGNPDTMDNVTPNMIIGASTEVHNGAHLIATAGGIDTHIHWICPQQAQHAIENGITTMIGGGSGPADGTHATTCTPGKFNIERMFQACEALPVNIGFFGKGNCSMLEPLKEQVVAGALGLKIHEDWGATPAVIDAALKVADEMDVQVAIHTDTLNESGFLEDTMKAINGRVIHTFHTEGAGGGHAPDIIKAAMYPNVLPASTNPTRPFTVNTIDEHLDMLMVCHHLDKRVPEDVAFADSRIRPETIAAEDILHDMGVFSIMSSDSQAMGRVGEVVTRTWQTADKMKAQRGALGDEGNDNFRIKRYIAKYTINPAIAHGISQYVGSLEVGKLADIVLWKPQFFGVKPEFVMKKGFISFAKMGDPNASIPTPQPVFYRPMFGANAKANTESAVYFVSQASVDANIKAQYGIQKETLAVKGCRDVGKKDLVHNNATPEITVDPERYEVRVDGEHITCEPATKVPLAQRYFLF</sequence>
<evidence type="ECO:0000255" key="1">
    <source>
        <dbReference type="HAMAP-Rule" id="MF_01953"/>
    </source>
</evidence>
<proteinExistence type="inferred from homology"/>
<accession>A3N2R4</accession>
<feature type="chain" id="PRO_1000070642" description="Urease subunit alpha">
    <location>
        <begin position="1"/>
        <end position="572"/>
    </location>
</feature>
<feature type="domain" description="Urease" evidence="1">
    <location>
        <begin position="136"/>
        <end position="572"/>
    </location>
</feature>
<feature type="active site" description="Proton donor" evidence="1">
    <location>
        <position position="327"/>
    </location>
</feature>
<feature type="binding site" evidence="1">
    <location>
        <position position="141"/>
    </location>
    <ligand>
        <name>Ni(2+)</name>
        <dbReference type="ChEBI" id="CHEBI:49786"/>
        <label>1</label>
    </ligand>
</feature>
<feature type="binding site" evidence="1">
    <location>
        <position position="143"/>
    </location>
    <ligand>
        <name>Ni(2+)</name>
        <dbReference type="ChEBI" id="CHEBI:49786"/>
        <label>1</label>
    </ligand>
</feature>
<feature type="binding site" description="via carbamate group" evidence="1">
    <location>
        <position position="224"/>
    </location>
    <ligand>
        <name>Ni(2+)</name>
        <dbReference type="ChEBI" id="CHEBI:49786"/>
        <label>1</label>
    </ligand>
</feature>
<feature type="binding site" description="via carbamate group" evidence="1">
    <location>
        <position position="224"/>
    </location>
    <ligand>
        <name>Ni(2+)</name>
        <dbReference type="ChEBI" id="CHEBI:49786"/>
        <label>2</label>
    </ligand>
</feature>
<feature type="binding site" evidence="1">
    <location>
        <position position="226"/>
    </location>
    <ligand>
        <name>substrate</name>
    </ligand>
</feature>
<feature type="binding site" evidence="1">
    <location>
        <position position="253"/>
    </location>
    <ligand>
        <name>Ni(2+)</name>
        <dbReference type="ChEBI" id="CHEBI:49786"/>
        <label>2</label>
    </ligand>
</feature>
<feature type="binding site" evidence="1">
    <location>
        <position position="279"/>
    </location>
    <ligand>
        <name>Ni(2+)</name>
        <dbReference type="ChEBI" id="CHEBI:49786"/>
        <label>2</label>
    </ligand>
</feature>
<feature type="binding site" evidence="1">
    <location>
        <position position="367"/>
    </location>
    <ligand>
        <name>Ni(2+)</name>
        <dbReference type="ChEBI" id="CHEBI:49786"/>
        <label>1</label>
    </ligand>
</feature>
<feature type="modified residue" description="N6-carboxylysine" evidence="1">
    <location>
        <position position="224"/>
    </location>
</feature>
<reference key="1">
    <citation type="journal article" date="2008" name="J. Bacteriol.">
        <title>The complete genome sequence of Actinobacillus pleuropneumoniae L20 (serotype 5b).</title>
        <authorList>
            <person name="Foote S.J."/>
            <person name="Bosse J.T."/>
            <person name="Bouevitch A.B."/>
            <person name="Langford P.R."/>
            <person name="Young N.M."/>
            <person name="Nash J.H.E."/>
        </authorList>
    </citation>
    <scope>NUCLEOTIDE SEQUENCE [LARGE SCALE GENOMIC DNA]</scope>
    <source>
        <strain>L20</strain>
    </source>
</reference>
<organism>
    <name type="scientific">Actinobacillus pleuropneumoniae serotype 5b (strain L20)</name>
    <dbReference type="NCBI Taxonomy" id="416269"/>
    <lineage>
        <taxon>Bacteria</taxon>
        <taxon>Pseudomonadati</taxon>
        <taxon>Pseudomonadota</taxon>
        <taxon>Gammaproteobacteria</taxon>
        <taxon>Pasteurellales</taxon>
        <taxon>Pasteurellaceae</taxon>
        <taxon>Actinobacillus</taxon>
    </lineage>
</organism>
<name>URE1_ACTP2</name>
<comment type="catalytic activity">
    <reaction evidence="1">
        <text>urea + 2 H2O + H(+) = hydrogencarbonate + 2 NH4(+)</text>
        <dbReference type="Rhea" id="RHEA:20557"/>
        <dbReference type="ChEBI" id="CHEBI:15377"/>
        <dbReference type="ChEBI" id="CHEBI:15378"/>
        <dbReference type="ChEBI" id="CHEBI:16199"/>
        <dbReference type="ChEBI" id="CHEBI:17544"/>
        <dbReference type="ChEBI" id="CHEBI:28938"/>
        <dbReference type="EC" id="3.5.1.5"/>
    </reaction>
</comment>
<comment type="cofactor">
    <cofactor evidence="1">
        <name>Ni cation</name>
        <dbReference type="ChEBI" id="CHEBI:25516"/>
    </cofactor>
    <text evidence="1">Binds 2 nickel ions per subunit.</text>
</comment>
<comment type="pathway">
    <text evidence="1">Nitrogen metabolism; urea degradation; CO(2) and NH(3) from urea (urease route): step 1/1.</text>
</comment>
<comment type="subunit">
    <text evidence="1">Heterotrimer of UreA (gamma), UreB (beta) and UreC (alpha) subunits. Three heterotrimers associate to form the active enzyme.</text>
</comment>
<comment type="subcellular location">
    <subcellularLocation>
        <location evidence="1">Cytoplasm</location>
    </subcellularLocation>
</comment>
<comment type="PTM">
    <text evidence="1">Carboxylation allows a single lysine to coordinate two nickel ions.</text>
</comment>
<comment type="similarity">
    <text evidence="1">Belongs to the metallo-dependent hydrolases superfamily. Urease alpha subunit family.</text>
</comment>
<gene>
    <name evidence="1" type="primary">ureC</name>
    <name type="ordered locus">APL_1616</name>
</gene>